<dbReference type="EMBL" id="AY026310">
    <property type="protein sequence ID" value="AAK21984.1"/>
    <property type="molecule type" value="Genomic_DNA"/>
</dbReference>
<dbReference type="EMBL" id="AY026293">
    <property type="protein sequence ID" value="AAK21984.1"/>
    <property type="status" value="JOINED"/>
    <property type="molecule type" value="Genomic_DNA"/>
</dbReference>
<dbReference type="EMBL" id="AY026294">
    <property type="protein sequence ID" value="AAK21984.1"/>
    <property type="status" value="JOINED"/>
    <property type="molecule type" value="Genomic_DNA"/>
</dbReference>
<dbReference type="EMBL" id="AY026295">
    <property type="protein sequence ID" value="AAK21984.1"/>
    <property type="status" value="JOINED"/>
    <property type="molecule type" value="Genomic_DNA"/>
</dbReference>
<dbReference type="EMBL" id="AY026296">
    <property type="protein sequence ID" value="AAK21984.1"/>
    <property type="status" value="JOINED"/>
    <property type="molecule type" value="Genomic_DNA"/>
</dbReference>
<dbReference type="EMBL" id="AY026297">
    <property type="protein sequence ID" value="AAK21984.1"/>
    <property type="status" value="JOINED"/>
    <property type="molecule type" value="Genomic_DNA"/>
</dbReference>
<dbReference type="EMBL" id="AY026298">
    <property type="protein sequence ID" value="AAK21984.1"/>
    <property type="status" value="JOINED"/>
    <property type="molecule type" value="Genomic_DNA"/>
</dbReference>
<dbReference type="EMBL" id="AY026299">
    <property type="protein sequence ID" value="AAK21984.1"/>
    <property type="status" value="JOINED"/>
    <property type="molecule type" value="Genomic_DNA"/>
</dbReference>
<dbReference type="EMBL" id="AY026300">
    <property type="protein sequence ID" value="AAK21984.1"/>
    <property type="status" value="JOINED"/>
    <property type="molecule type" value="Genomic_DNA"/>
</dbReference>
<dbReference type="EMBL" id="AY026301">
    <property type="protein sequence ID" value="AAK21984.1"/>
    <property type="status" value="JOINED"/>
    <property type="molecule type" value="Genomic_DNA"/>
</dbReference>
<dbReference type="EMBL" id="AY026302">
    <property type="protein sequence ID" value="AAK21984.1"/>
    <property type="status" value="JOINED"/>
    <property type="molecule type" value="Genomic_DNA"/>
</dbReference>
<dbReference type="EMBL" id="AY026303">
    <property type="protein sequence ID" value="AAK21984.1"/>
    <property type="status" value="JOINED"/>
    <property type="molecule type" value="Genomic_DNA"/>
</dbReference>
<dbReference type="EMBL" id="AY026304">
    <property type="protein sequence ID" value="AAK21984.1"/>
    <property type="status" value="JOINED"/>
    <property type="molecule type" value="Genomic_DNA"/>
</dbReference>
<dbReference type="EMBL" id="AY026305">
    <property type="protein sequence ID" value="AAK21984.1"/>
    <property type="status" value="JOINED"/>
    <property type="molecule type" value="Genomic_DNA"/>
</dbReference>
<dbReference type="EMBL" id="AY026306">
    <property type="protein sequence ID" value="AAK21984.1"/>
    <property type="status" value="JOINED"/>
    <property type="molecule type" value="Genomic_DNA"/>
</dbReference>
<dbReference type="EMBL" id="AY026307">
    <property type="protein sequence ID" value="AAK21984.1"/>
    <property type="status" value="JOINED"/>
    <property type="molecule type" value="Genomic_DNA"/>
</dbReference>
<dbReference type="EMBL" id="AY026308">
    <property type="protein sequence ID" value="AAK21984.1"/>
    <property type="status" value="JOINED"/>
    <property type="molecule type" value="Genomic_DNA"/>
</dbReference>
<dbReference type="EMBL" id="AY026309">
    <property type="protein sequence ID" value="AAK21984.1"/>
    <property type="status" value="JOINED"/>
    <property type="molecule type" value="Genomic_DNA"/>
</dbReference>
<dbReference type="EMBL" id="AY026310">
    <property type="protein sequence ID" value="AAK21985.1"/>
    <property type="molecule type" value="Genomic_DNA"/>
</dbReference>
<dbReference type="EMBL" id="AY026293">
    <property type="protein sequence ID" value="AAK21985.1"/>
    <property type="status" value="JOINED"/>
    <property type="molecule type" value="Genomic_DNA"/>
</dbReference>
<dbReference type="EMBL" id="AY026294">
    <property type="protein sequence ID" value="AAK21985.1"/>
    <property type="status" value="JOINED"/>
    <property type="molecule type" value="Genomic_DNA"/>
</dbReference>
<dbReference type="EMBL" id="AY026295">
    <property type="protein sequence ID" value="AAK21985.1"/>
    <property type="status" value="JOINED"/>
    <property type="molecule type" value="Genomic_DNA"/>
</dbReference>
<dbReference type="EMBL" id="AY026296">
    <property type="protein sequence ID" value="AAK21985.1"/>
    <property type="status" value="JOINED"/>
    <property type="molecule type" value="Genomic_DNA"/>
</dbReference>
<dbReference type="EMBL" id="AY026297">
    <property type="protein sequence ID" value="AAK21985.1"/>
    <property type="status" value="JOINED"/>
    <property type="molecule type" value="Genomic_DNA"/>
</dbReference>
<dbReference type="EMBL" id="AY026299">
    <property type="protein sequence ID" value="AAK21985.1"/>
    <property type="status" value="JOINED"/>
    <property type="molecule type" value="Genomic_DNA"/>
</dbReference>
<dbReference type="EMBL" id="AY026300">
    <property type="protein sequence ID" value="AAK21985.1"/>
    <property type="status" value="JOINED"/>
    <property type="molecule type" value="Genomic_DNA"/>
</dbReference>
<dbReference type="EMBL" id="AY026301">
    <property type="protein sequence ID" value="AAK21985.1"/>
    <property type="status" value="JOINED"/>
    <property type="molecule type" value="Genomic_DNA"/>
</dbReference>
<dbReference type="EMBL" id="AY026302">
    <property type="protein sequence ID" value="AAK21985.1"/>
    <property type="status" value="JOINED"/>
    <property type="molecule type" value="Genomic_DNA"/>
</dbReference>
<dbReference type="EMBL" id="AY026303">
    <property type="protein sequence ID" value="AAK21985.1"/>
    <property type="status" value="JOINED"/>
    <property type="molecule type" value="Genomic_DNA"/>
</dbReference>
<dbReference type="EMBL" id="AY026304">
    <property type="protein sequence ID" value="AAK21985.1"/>
    <property type="status" value="JOINED"/>
    <property type="molecule type" value="Genomic_DNA"/>
</dbReference>
<dbReference type="EMBL" id="AY026305">
    <property type="protein sequence ID" value="AAK21985.1"/>
    <property type="status" value="JOINED"/>
    <property type="molecule type" value="Genomic_DNA"/>
</dbReference>
<dbReference type="EMBL" id="AY026306">
    <property type="protein sequence ID" value="AAK21985.1"/>
    <property type="status" value="JOINED"/>
    <property type="molecule type" value="Genomic_DNA"/>
</dbReference>
<dbReference type="EMBL" id="AY026307">
    <property type="protein sequence ID" value="AAK21985.1"/>
    <property type="status" value="JOINED"/>
    <property type="molecule type" value="Genomic_DNA"/>
</dbReference>
<dbReference type="EMBL" id="AY026308">
    <property type="protein sequence ID" value="AAK21985.1"/>
    <property type="status" value="JOINED"/>
    <property type="molecule type" value="Genomic_DNA"/>
</dbReference>
<dbReference type="EMBL" id="AY026309">
    <property type="protein sequence ID" value="AAK21985.1"/>
    <property type="status" value="JOINED"/>
    <property type="molecule type" value="Genomic_DNA"/>
</dbReference>
<dbReference type="EMBL" id="AF500116">
    <property type="protein sequence ID" value="AAM22101.1"/>
    <property type="molecule type" value="mRNA"/>
</dbReference>
<dbReference type="EMBL" id="AK289474">
    <property type="protein sequence ID" value="BAF82163.1"/>
    <property type="molecule type" value="mRNA"/>
</dbReference>
<dbReference type="EMBL" id="CH471059">
    <property type="protein sequence ID" value="EAX06692.1"/>
    <property type="molecule type" value="Genomic_DNA"/>
</dbReference>
<dbReference type="EMBL" id="AL035415">
    <property type="status" value="NOT_ANNOTATED_CDS"/>
    <property type="molecule type" value="Genomic_DNA"/>
</dbReference>
<dbReference type="EMBL" id="AL161644">
    <property type="status" value="NOT_ANNOTATED_CDS"/>
    <property type="molecule type" value="Genomic_DNA"/>
</dbReference>
<dbReference type="EMBL" id="BC003605">
    <property type="protein sequence ID" value="AAH03605.1"/>
    <property type="molecule type" value="mRNA"/>
</dbReference>
<dbReference type="EMBL" id="BC066365">
    <property type="protein sequence ID" value="AAH66365.1"/>
    <property type="molecule type" value="mRNA"/>
</dbReference>
<dbReference type="CCDS" id="CCDS30726.1">
    <molecule id="Q9BWW4-2"/>
</dbReference>
<dbReference type="CCDS" id="CCDS590.1">
    <molecule id="Q9BWW4-3"/>
</dbReference>
<dbReference type="CCDS" id="CCDS591.1">
    <molecule id="Q9BWW4-1"/>
</dbReference>
<dbReference type="RefSeq" id="NP_001009955.1">
    <molecule id="Q9BWW4-2"/>
    <property type="nucleotide sequence ID" value="NM_001009955.4"/>
</dbReference>
<dbReference type="RefSeq" id="NP_060540.2">
    <molecule id="Q9BWW4-3"/>
    <property type="nucleotide sequence ID" value="NM_018070.4"/>
</dbReference>
<dbReference type="RefSeq" id="NP_663768.1">
    <molecule id="Q9BWW4-1"/>
    <property type="nucleotide sequence ID" value="NM_145716.4"/>
</dbReference>
<dbReference type="SMR" id="Q9BWW4"/>
<dbReference type="BioGRID" id="117175">
    <property type="interactions" value="86"/>
</dbReference>
<dbReference type="DIP" id="DIP-48897N"/>
<dbReference type="FunCoup" id="Q9BWW4">
    <property type="interactions" value="1680"/>
</dbReference>
<dbReference type="IntAct" id="Q9BWW4">
    <property type="interactions" value="75"/>
</dbReference>
<dbReference type="MINT" id="Q9BWW4"/>
<dbReference type="STRING" id="9606.ENSP00000360371"/>
<dbReference type="GlyCosmos" id="Q9BWW4">
    <property type="glycosylation" value="1 site, 1 glycan"/>
</dbReference>
<dbReference type="GlyGen" id="Q9BWW4">
    <property type="glycosylation" value="3 sites, 1 O-linked glycan (3 sites)"/>
</dbReference>
<dbReference type="iPTMnet" id="Q9BWW4"/>
<dbReference type="PhosphoSitePlus" id="Q9BWW4"/>
<dbReference type="BioMuta" id="SSBP3"/>
<dbReference type="DMDM" id="27734581"/>
<dbReference type="jPOST" id="Q9BWW4"/>
<dbReference type="MassIVE" id="Q9BWW4"/>
<dbReference type="PaxDb" id="9606-ENSP00000360371"/>
<dbReference type="PeptideAtlas" id="Q9BWW4"/>
<dbReference type="ProteomicsDB" id="79330">
    <molecule id="Q9BWW4-1"/>
</dbReference>
<dbReference type="ProteomicsDB" id="79331">
    <molecule id="Q9BWW4-2"/>
</dbReference>
<dbReference type="ProteomicsDB" id="79332">
    <molecule id="Q9BWW4-3"/>
</dbReference>
<dbReference type="Pumba" id="Q9BWW4"/>
<dbReference type="Antibodypedia" id="33182">
    <property type="antibodies" value="120 antibodies from 17 providers"/>
</dbReference>
<dbReference type="DNASU" id="23648"/>
<dbReference type="Ensembl" id="ENST00000357475.9">
    <molecule id="Q9BWW4-3"/>
    <property type="protein sequence ID" value="ENSP00000350067.4"/>
    <property type="gene ID" value="ENSG00000157216.17"/>
</dbReference>
<dbReference type="Ensembl" id="ENST00000371319.8">
    <molecule id="Q9BWW4-2"/>
    <property type="protein sequence ID" value="ENSP00000360370.3"/>
    <property type="gene ID" value="ENSG00000157216.17"/>
</dbReference>
<dbReference type="Ensembl" id="ENST00000610401.6">
    <molecule id="Q9BWW4-1"/>
    <property type="protein sequence ID" value="ENSP00000479674.2"/>
    <property type="gene ID" value="ENSG00000157216.17"/>
</dbReference>
<dbReference type="GeneID" id="23648"/>
<dbReference type="KEGG" id="hsa:23648"/>
<dbReference type="MANE-Select" id="ENST00000610401.6">
    <property type="protein sequence ID" value="ENSP00000479674.2"/>
    <property type="RefSeq nucleotide sequence ID" value="NM_145716.4"/>
    <property type="RefSeq protein sequence ID" value="NP_663768.1"/>
</dbReference>
<dbReference type="UCSC" id="uc001cxe.5">
    <molecule id="Q9BWW4-1"/>
    <property type="organism name" value="human"/>
</dbReference>
<dbReference type="AGR" id="HGNC:15674"/>
<dbReference type="CTD" id="23648"/>
<dbReference type="DisGeNET" id="23648"/>
<dbReference type="GeneCards" id="SSBP3"/>
<dbReference type="HGNC" id="HGNC:15674">
    <property type="gene designation" value="SSBP3"/>
</dbReference>
<dbReference type="HPA" id="ENSG00000157216">
    <property type="expression patterns" value="Low tissue specificity"/>
</dbReference>
<dbReference type="MIM" id="607390">
    <property type="type" value="gene"/>
</dbReference>
<dbReference type="neXtProt" id="NX_Q9BWW4"/>
<dbReference type="OpenTargets" id="ENSG00000157216"/>
<dbReference type="PharmGKB" id="PA38017"/>
<dbReference type="VEuPathDB" id="HostDB:ENSG00000157216"/>
<dbReference type="eggNOG" id="KOG4594">
    <property type="taxonomic scope" value="Eukaryota"/>
</dbReference>
<dbReference type="GeneTree" id="ENSGT00950000183049"/>
<dbReference type="HOGENOM" id="CLU_053914_1_0_1"/>
<dbReference type="InParanoid" id="Q9BWW4"/>
<dbReference type="OMA" id="HRMGTPN"/>
<dbReference type="OrthoDB" id="5600002at2759"/>
<dbReference type="PAN-GO" id="Q9BWW4">
    <property type="GO annotations" value="2 GO annotations based on evolutionary models"/>
</dbReference>
<dbReference type="PhylomeDB" id="Q9BWW4"/>
<dbReference type="TreeFam" id="TF318961"/>
<dbReference type="PathwayCommons" id="Q9BWW4"/>
<dbReference type="SignaLink" id="Q9BWW4"/>
<dbReference type="SIGNOR" id="Q9BWW4"/>
<dbReference type="BioGRID-ORCS" id="23648">
    <property type="hits" value="239 hits in 1163 CRISPR screens"/>
</dbReference>
<dbReference type="ChiTaRS" id="SSBP3">
    <property type="organism name" value="human"/>
</dbReference>
<dbReference type="GeneWiki" id="SSBP3"/>
<dbReference type="GenomeRNAi" id="23648"/>
<dbReference type="Pharos" id="Q9BWW4">
    <property type="development level" value="Tbio"/>
</dbReference>
<dbReference type="PRO" id="PR:Q9BWW4"/>
<dbReference type="Proteomes" id="UP000005640">
    <property type="component" value="Chromosome 1"/>
</dbReference>
<dbReference type="RNAct" id="Q9BWW4">
    <property type="molecule type" value="protein"/>
</dbReference>
<dbReference type="Bgee" id="ENSG00000157216">
    <property type="expression patterns" value="Expressed in cortical plate and 187 other cell types or tissues"/>
</dbReference>
<dbReference type="ExpressionAtlas" id="Q9BWW4">
    <property type="expression patterns" value="baseline and differential"/>
</dbReference>
<dbReference type="GO" id="GO:0005634">
    <property type="term" value="C:nucleus"/>
    <property type="evidence" value="ECO:0000318"/>
    <property type="project" value="GO_Central"/>
</dbReference>
<dbReference type="GO" id="GO:0005667">
    <property type="term" value="C:transcription regulator complex"/>
    <property type="evidence" value="ECO:0007669"/>
    <property type="project" value="Ensembl"/>
</dbReference>
<dbReference type="GO" id="GO:0003697">
    <property type="term" value="F:single-stranded DNA binding"/>
    <property type="evidence" value="ECO:0007669"/>
    <property type="project" value="InterPro"/>
</dbReference>
<dbReference type="GO" id="GO:0003713">
    <property type="term" value="F:transcription coactivator activity"/>
    <property type="evidence" value="ECO:0007669"/>
    <property type="project" value="Ensembl"/>
</dbReference>
<dbReference type="GO" id="GO:0060323">
    <property type="term" value="P:head morphogenesis"/>
    <property type="evidence" value="ECO:0007669"/>
    <property type="project" value="Ensembl"/>
</dbReference>
<dbReference type="GO" id="GO:0002244">
    <property type="term" value="P:hematopoietic progenitor cell differentiation"/>
    <property type="evidence" value="ECO:0007669"/>
    <property type="project" value="Ensembl"/>
</dbReference>
<dbReference type="GO" id="GO:0048382">
    <property type="term" value="P:mesendoderm development"/>
    <property type="evidence" value="ECO:0007669"/>
    <property type="project" value="Ensembl"/>
</dbReference>
<dbReference type="GO" id="GO:0021547">
    <property type="term" value="P:midbrain-hindbrain boundary initiation"/>
    <property type="evidence" value="ECO:0007669"/>
    <property type="project" value="Ensembl"/>
</dbReference>
<dbReference type="GO" id="GO:2000744">
    <property type="term" value="P:positive regulation of anterior head development"/>
    <property type="evidence" value="ECO:0007669"/>
    <property type="project" value="Ensembl"/>
</dbReference>
<dbReference type="GO" id="GO:0008284">
    <property type="term" value="P:positive regulation of cell population proliferation"/>
    <property type="evidence" value="ECO:0007669"/>
    <property type="project" value="Ensembl"/>
</dbReference>
<dbReference type="GO" id="GO:0045944">
    <property type="term" value="P:positive regulation of transcription by RNA polymerase II"/>
    <property type="evidence" value="ECO:0000318"/>
    <property type="project" value="GO_Central"/>
</dbReference>
<dbReference type="GO" id="GO:0021501">
    <property type="term" value="P:prechordal plate formation"/>
    <property type="evidence" value="ECO:0007669"/>
    <property type="project" value="Ensembl"/>
</dbReference>
<dbReference type="GO" id="GO:0065003">
    <property type="term" value="P:protein-containing complex assembly"/>
    <property type="evidence" value="ECO:0007669"/>
    <property type="project" value="Ensembl"/>
</dbReference>
<dbReference type="InterPro" id="IPR006594">
    <property type="entry name" value="LisH"/>
</dbReference>
<dbReference type="InterPro" id="IPR008116">
    <property type="entry name" value="SSDP_DNA-bd"/>
</dbReference>
<dbReference type="PANTHER" id="PTHR12610">
    <property type="entry name" value="SINGLE STRANDED DNA BINDING PROTEIN"/>
    <property type="match status" value="1"/>
</dbReference>
<dbReference type="PANTHER" id="PTHR12610:SF22">
    <property type="entry name" value="SINGLE-STRANDED DNA-BINDING PROTEIN 3"/>
    <property type="match status" value="1"/>
</dbReference>
<dbReference type="Pfam" id="PF04503">
    <property type="entry name" value="SSDP"/>
    <property type="match status" value="1"/>
</dbReference>
<dbReference type="PRINTS" id="PR01743">
    <property type="entry name" value="SSDNABINDING"/>
</dbReference>
<dbReference type="SMART" id="SM00667">
    <property type="entry name" value="LisH"/>
    <property type="match status" value="1"/>
</dbReference>
<dbReference type="PROSITE" id="PS50896">
    <property type="entry name" value="LISH"/>
    <property type="match status" value="1"/>
</dbReference>
<keyword id="KW-0007">Acetylation</keyword>
<keyword id="KW-0025">Alternative splicing</keyword>
<keyword id="KW-0238">DNA-binding</keyword>
<keyword id="KW-0488">Methylation</keyword>
<keyword id="KW-0539">Nucleus</keyword>
<keyword id="KW-0597">Phosphoprotein</keyword>
<keyword id="KW-1267">Proteomics identification</keyword>
<keyword id="KW-1185">Reference proteome</keyword>
<keyword id="KW-0804">Transcription</keyword>
<keyword id="KW-0805">Transcription regulation</keyword>
<gene>
    <name type="primary">SSBP3</name>
    <name type="synonym">SSDP</name>
    <name type="synonym">SSDP1</name>
</gene>
<protein>
    <recommendedName>
        <fullName>Single-stranded DNA-binding protein 3</fullName>
    </recommendedName>
    <alternativeName>
        <fullName>Sequence-specific single-stranded-DNA-binding protein</fullName>
    </alternativeName>
</protein>
<evidence type="ECO:0000250" key="1"/>
<evidence type="ECO:0000250" key="2">
    <source>
        <dbReference type="UniProtKB" id="Q9D032"/>
    </source>
</evidence>
<evidence type="ECO:0000255" key="3">
    <source>
        <dbReference type="PROSITE-ProRule" id="PRU00126"/>
    </source>
</evidence>
<evidence type="ECO:0000256" key="4">
    <source>
        <dbReference type="SAM" id="MobiDB-lite"/>
    </source>
</evidence>
<evidence type="ECO:0000303" key="5">
    <source>
    </source>
</evidence>
<evidence type="ECO:0000303" key="6">
    <source>
    </source>
</evidence>
<evidence type="ECO:0000303" key="7">
    <source ref="2"/>
</evidence>
<evidence type="ECO:0007744" key="8">
    <source>
    </source>
</evidence>
<evidence type="ECO:0007744" key="9">
    <source>
    </source>
</evidence>
<evidence type="ECO:0007744" key="10">
    <source>
    </source>
</evidence>
<evidence type="ECO:0007744" key="11">
    <source>
    </source>
</evidence>
<evidence type="ECO:0007744" key="12">
    <source>
    </source>
</evidence>
<evidence type="ECO:0007744" key="13">
    <source>
    </source>
</evidence>
<evidence type="ECO:0007744" key="14">
    <source>
    </source>
</evidence>
<evidence type="ECO:0007744" key="15">
    <source>
    </source>
</evidence>
<evidence type="ECO:0007744" key="16">
    <source>
    </source>
</evidence>
<comment type="function">
    <text evidence="1">May be involved in transcription regulation of the alpha 2(I) collagen gene where it binds to the single-stranded polypyrimidine sequences in the promoter region.</text>
</comment>
<comment type="interaction">
    <interactant intactId="EBI-2902395">
        <id>Q9BWW4</id>
    </interactant>
    <interactant intactId="EBI-2105445">
        <id>P51451</id>
        <label>BLK</label>
    </interactant>
    <organismsDiffer>false</organismsDiffer>
    <experiments>3</experiments>
</comment>
<comment type="interaction">
    <interactant intactId="EBI-2902395">
        <id>Q9BWW4</id>
    </interactant>
    <interactant intactId="EBI-11984733">
        <id>O60941-5</id>
        <label>DTNB</label>
    </interactant>
    <organismsDiffer>false</organismsDiffer>
    <experiments>3</experiments>
</comment>
<comment type="interaction">
    <interactant intactId="EBI-2902395">
        <id>Q9BWW4</id>
    </interactant>
    <interactant intactId="EBI-739737">
        <id>Q01844</id>
        <label>EWSR1</label>
    </interactant>
    <organismsDiffer>false</organismsDiffer>
    <experiments>3</experiments>
</comment>
<comment type="interaction">
    <interactant intactId="EBI-2902395">
        <id>Q9BWW4</id>
    </interactant>
    <interactant intactId="EBI-465156">
        <id>Q9UBH0</id>
        <label>IL36RN</label>
    </interactant>
    <organismsDiffer>false</organismsDiffer>
    <experiments>8</experiments>
</comment>
<comment type="interaction">
    <interactant intactId="EBI-2902395">
        <id>Q9BWW4</id>
    </interactant>
    <interactant intactId="EBI-677177">
        <id>Q86U70</id>
        <label>LDB1</label>
    </interactant>
    <organismsDiffer>false</organismsDiffer>
    <experiments>6</experiments>
</comment>
<comment type="interaction">
    <interactant intactId="EBI-2902395">
        <id>Q9BWW4</id>
    </interactant>
    <interactant intactId="EBI-11979761">
        <id>Q86U70-2</id>
        <label>LDB1</label>
    </interactant>
    <organismsDiffer>false</organismsDiffer>
    <experiments>5</experiments>
</comment>
<comment type="interaction">
    <interactant intactId="EBI-2902395">
        <id>Q9BWW4</id>
    </interactant>
    <interactant intactId="EBI-2865580">
        <id>O43679</id>
        <label>LDB2</label>
    </interactant>
    <organismsDiffer>false</organismsDiffer>
    <experiments>4</experiments>
</comment>
<comment type="interaction">
    <interactant intactId="EBI-2902395">
        <id>Q9BWW4</id>
    </interactant>
    <interactant intactId="EBI-296386">
        <id>O60663</id>
        <label>LMX1B</label>
    </interactant>
    <organismsDiffer>false</organismsDiffer>
    <experiments>4</experiments>
</comment>
<comment type="interaction">
    <interactant intactId="EBI-2902395">
        <id>Q9BWW4</id>
    </interactant>
    <interactant intactId="EBI-752122">
        <id>Q9NPJ8</id>
        <label>NXT2</label>
    </interactant>
    <organismsDiffer>false</organismsDiffer>
    <experiments>3</experiments>
</comment>
<comment type="interaction">
    <interactant intactId="EBI-2902395">
        <id>Q9BWW4</id>
    </interactant>
    <interactant intactId="EBI-10698339">
        <id>Q9NPJ8-3</id>
        <label>NXT2</label>
    </interactant>
    <organismsDiffer>false</organismsDiffer>
    <experiments>3</experiments>
</comment>
<comment type="interaction">
    <interactant intactId="EBI-2902395">
        <id>Q9BWW4</id>
    </interactant>
    <interactant intactId="EBI-714158">
        <id>Q13526</id>
        <label>PIN1</label>
    </interactant>
    <organismsDiffer>false</organismsDiffer>
    <experiments>6</experiments>
</comment>
<comment type="interaction">
    <interactant intactId="EBI-2902395">
        <id>Q9BWW4</id>
    </interactant>
    <interactant intactId="EBI-12035119">
        <id>O75177-5</id>
        <label>SS18L1</label>
    </interactant>
    <organismsDiffer>false</organismsDiffer>
    <experiments>3</experiments>
</comment>
<comment type="interaction">
    <interactant intactId="EBI-2902395">
        <id>Q9BWW4</id>
    </interactant>
    <interactant intactId="EBI-2853126">
        <id>Q9NUY8</id>
        <label>TBC1D23</label>
    </interactant>
    <organismsDiffer>false</organismsDiffer>
    <experiments>3</experiments>
</comment>
<comment type="interaction">
    <interactant intactId="EBI-2902395">
        <id>Q9BWW4</id>
    </interactant>
    <interactant intactId="EBI-10314276">
        <id>Q9NUY8-2</id>
        <label>TBC1D23</label>
    </interactant>
    <organismsDiffer>false</organismsDiffer>
    <experiments>3</experiments>
</comment>
<comment type="interaction">
    <interactant intactId="EBI-2902395">
        <id>Q9BWW4</id>
    </interactant>
    <interactant intactId="EBI-515331">
        <id>P07947</id>
        <label>YES1</label>
    </interactant>
    <organismsDiffer>false</organismsDiffer>
    <experiments>6</experiments>
</comment>
<comment type="subcellular location">
    <subcellularLocation>
        <location evidence="1">Nucleus</location>
    </subcellularLocation>
</comment>
<comment type="alternative products">
    <event type="alternative splicing"/>
    <isoform>
        <id>Q9BWW4-1</id>
        <name>1</name>
        <sequence type="displayed"/>
    </isoform>
    <isoform>
        <id>Q9BWW4-2</id>
        <name>2</name>
        <sequence type="described" ref="VSP_006260"/>
    </isoform>
    <isoform>
        <id>Q9BWW4-3</id>
        <name>3</name>
        <sequence type="described" ref="VSP_006261"/>
    </isoform>
</comment>
<comment type="tissue specificity">
    <text>Highly expressed in all hematopoietic tissues, including spleen, lymph node, peripheral blood, bone marrow, thymus, and fetal liver, with highest expression in thymus and fetal liver. Expression is also high in heart, brain, kidney, and skeletal muscle.</text>
</comment>
<accession>Q9BWW4</accession>
<accession>A8K0A9</accession>
<accession>Q5T860</accession>
<accession>Q5T861</accession>
<accession>Q9BTM0</accession>
<accession>Q9BWW3</accession>
<reference key="1">
    <citation type="journal article" date="2002" name="Genomics">
        <title>A novel, evolutionarily conserved gene family with putative sequence-specific single-stranded DNA-binding activity.</title>
        <authorList>
            <person name="Castro P.D."/>
            <person name="Liang H."/>
            <person name="Liang J.C."/>
            <person name="Nagarajan L."/>
        </authorList>
    </citation>
    <scope>NUCLEOTIDE SEQUENCE [GENOMIC DNA]</scope>
    <scope>ALTERNATIVE SPLICING (ISOFORMS 1 AND 2)</scope>
</reference>
<reference key="2">
    <citation type="submission" date="2002-04" db="EMBL/GenBank/DDBJ databases">
        <authorList>
            <person name="Bayarsaihan D."/>
        </authorList>
    </citation>
    <scope>NUCLEOTIDE SEQUENCE [MRNA] (ISOFORM 3)</scope>
</reference>
<reference key="3">
    <citation type="journal article" date="2004" name="Nat. Genet.">
        <title>Complete sequencing and characterization of 21,243 full-length human cDNAs.</title>
        <authorList>
            <person name="Ota T."/>
            <person name="Suzuki Y."/>
            <person name="Nishikawa T."/>
            <person name="Otsuki T."/>
            <person name="Sugiyama T."/>
            <person name="Irie R."/>
            <person name="Wakamatsu A."/>
            <person name="Hayashi K."/>
            <person name="Sato H."/>
            <person name="Nagai K."/>
            <person name="Kimura K."/>
            <person name="Makita H."/>
            <person name="Sekine M."/>
            <person name="Obayashi M."/>
            <person name="Nishi T."/>
            <person name="Shibahara T."/>
            <person name="Tanaka T."/>
            <person name="Ishii S."/>
            <person name="Yamamoto J."/>
            <person name="Saito K."/>
            <person name="Kawai Y."/>
            <person name="Isono Y."/>
            <person name="Nakamura Y."/>
            <person name="Nagahari K."/>
            <person name="Murakami K."/>
            <person name="Yasuda T."/>
            <person name="Iwayanagi T."/>
            <person name="Wagatsuma M."/>
            <person name="Shiratori A."/>
            <person name="Sudo H."/>
            <person name="Hosoiri T."/>
            <person name="Kaku Y."/>
            <person name="Kodaira H."/>
            <person name="Kondo H."/>
            <person name="Sugawara M."/>
            <person name="Takahashi M."/>
            <person name="Kanda K."/>
            <person name="Yokoi T."/>
            <person name="Furuya T."/>
            <person name="Kikkawa E."/>
            <person name="Omura Y."/>
            <person name="Abe K."/>
            <person name="Kamihara K."/>
            <person name="Katsuta N."/>
            <person name="Sato K."/>
            <person name="Tanikawa M."/>
            <person name="Yamazaki M."/>
            <person name="Ninomiya K."/>
            <person name="Ishibashi T."/>
            <person name="Yamashita H."/>
            <person name="Murakawa K."/>
            <person name="Fujimori K."/>
            <person name="Tanai H."/>
            <person name="Kimata M."/>
            <person name="Watanabe M."/>
            <person name="Hiraoka S."/>
            <person name="Chiba Y."/>
            <person name="Ishida S."/>
            <person name="Ono Y."/>
            <person name="Takiguchi S."/>
            <person name="Watanabe S."/>
            <person name="Yosida M."/>
            <person name="Hotuta T."/>
            <person name="Kusano J."/>
            <person name="Kanehori K."/>
            <person name="Takahashi-Fujii A."/>
            <person name="Hara H."/>
            <person name="Tanase T.-O."/>
            <person name="Nomura Y."/>
            <person name="Togiya S."/>
            <person name="Komai F."/>
            <person name="Hara R."/>
            <person name="Takeuchi K."/>
            <person name="Arita M."/>
            <person name="Imose N."/>
            <person name="Musashino K."/>
            <person name="Yuuki H."/>
            <person name="Oshima A."/>
            <person name="Sasaki N."/>
            <person name="Aotsuka S."/>
            <person name="Yoshikawa Y."/>
            <person name="Matsunawa H."/>
            <person name="Ichihara T."/>
            <person name="Shiohata N."/>
            <person name="Sano S."/>
            <person name="Moriya S."/>
            <person name="Momiyama H."/>
            <person name="Satoh N."/>
            <person name="Takami S."/>
            <person name="Terashima Y."/>
            <person name="Suzuki O."/>
            <person name="Nakagawa S."/>
            <person name="Senoh A."/>
            <person name="Mizoguchi H."/>
            <person name="Goto Y."/>
            <person name="Shimizu F."/>
            <person name="Wakebe H."/>
            <person name="Hishigaki H."/>
            <person name="Watanabe T."/>
            <person name="Sugiyama A."/>
            <person name="Takemoto M."/>
            <person name="Kawakami B."/>
            <person name="Yamazaki M."/>
            <person name="Watanabe K."/>
            <person name="Kumagai A."/>
            <person name="Itakura S."/>
            <person name="Fukuzumi Y."/>
            <person name="Fujimori Y."/>
            <person name="Komiyama M."/>
            <person name="Tashiro H."/>
            <person name="Tanigami A."/>
            <person name="Fujiwara T."/>
            <person name="Ono T."/>
            <person name="Yamada K."/>
            <person name="Fujii Y."/>
            <person name="Ozaki K."/>
            <person name="Hirao M."/>
            <person name="Ohmori Y."/>
            <person name="Kawabata A."/>
            <person name="Hikiji T."/>
            <person name="Kobatake N."/>
            <person name="Inagaki H."/>
            <person name="Ikema Y."/>
            <person name="Okamoto S."/>
            <person name="Okitani R."/>
            <person name="Kawakami T."/>
            <person name="Noguchi S."/>
            <person name="Itoh T."/>
            <person name="Shigeta K."/>
            <person name="Senba T."/>
            <person name="Matsumura K."/>
            <person name="Nakajima Y."/>
            <person name="Mizuno T."/>
            <person name="Morinaga M."/>
            <person name="Sasaki M."/>
            <person name="Togashi T."/>
            <person name="Oyama M."/>
            <person name="Hata H."/>
            <person name="Watanabe M."/>
            <person name="Komatsu T."/>
            <person name="Mizushima-Sugano J."/>
            <person name="Satoh T."/>
            <person name="Shirai Y."/>
            <person name="Takahashi Y."/>
            <person name="Nakagawa K."/>
            <person name="Okumura K."/>
            <person name="Nagase T."/>
            <person name="Nomura N."/>
            <person name="Kikuchi H."/>
            <person name="Masuho Y."/>
            <person name="Yamashita R."/>
            <person name="Nakai K."/>
            <person name="Yada T."/>
            <person name="Nakamura Y."/>
            <person name="Ohara O."/>
            <person name="Isogai T."/>
            <person name="Sugano S."/>
        </authorList>
    </citation>
    <scope>NUCLEOTIDE SEQUENCE [LARGE SCALE MRNA] (ISOFORM 2)</scope>
    <source>
        <tissue>Cerebellum</tissue>
    </source>
</reference>
<reference key="4">
    <citation type="submission" date="2005-09" db="EMBL/GenBank/DDBJ databases">
        <authorList>
            <person name="Mural R.J."/>
            <person name="Istrail S."/>
            <person name="Sutton G.G."/>
            <person name="Florea L."/>
            <person name="Halpern A.L."/>
            <person name="Mobarry C.M."/>
            <person name="Lippert R."/>
            <person name="Walenz B."/>
            <person name="Shatkay H."/>
            <person name="Dew I."/>
            <person name="Miller J.R."/>
            <person name="Flanigan M.J."/>
            <person name="Edwards N.J."/>
            <person name="Bolanos R."/>
            <person name="Fasulo D."/>
            <person name="Halldorsson B.V."/>
            <person name="Hannenhalli S."/>
            <person name="Turner R."/>
            <person name="Yooseph S."/>
            <person name="Lu F."/>
            <person name="Nusskern D.R."/>
            <person name="Shue B.C."/>
            <person name="Zheng X.H."/>
            <person name="Zhong F."/>
            <person name="Delcher A.L."/>
            <person name="Huson D.H."/>
            <person name="Kravitz S.A."/>
            <person name="Mouchard L."/>
            <person name="Reinert K."/>
            <person name="Remington K.A."/>
            <person name="Clark A.G."/>
            <person name="Waterman M.S."/>
            <person name="Eichler E.E."/>
            <person name="Adams M.D."/>
            <person name="Hunkapiller M.W."/>
            <person name="Myers E.W."/>
            <person name="Venter J.C."/>
        </authorList>
    </citation>
    <scope>NUCLEOTIDE SEQUENCE [LARGE SCALE GENOMIC DNA]</scope>
</reference>
<reference key="5">
    <citation type="journal article" date="2006" name="Nature">
        <title>The DNA sequence and biological annotation of human chromosome 1.</title>
        <authorList>
            <person name="Gregory S.G."/>
            <person name="Barlow K.F."/>
            <person name="McLay K.E."/>
            <person name="Kaul R."/>
            <person name="Swarbreck D."/>
            <person name="Dunham A."/>
            <person name="Scott C.E."/>
            <person name="Howe K.L."/>
            <person name="Woodfine K."/>
            <person name="Spencer C.C.A."/>
            <person name="Jones M.C."/>
            <person name="Gillson C."/>
            <person name="Searle S."/>
            <person name="Zhou Y."/>
            <person name="Kokocinski F."/>
            <person name="McDonald L."/>
            <person name="Evans R."/>
            <person name="Phillips K."/>
            <person name="Atkinson A."/>
            <person name="Cooper R."/>
            <person name="Jones C."/>
            <person name="Hall R.E."/>
            <person name="Andrews T.D."/>
            <person name="Lloyd C."/>
            <person name="Ainscough R."/>
            <person name="Almeida J.P."/>
            <person name="Ambrose K.D."/>
            <person name="Anderson F."/>
            <person name="Andrew R.W."/>
            <person name="Ashwell R.I.S."/>
            <person name="Aubin K."/>
            <person name="Babbage A.K."/>
            <person name="Bagguley C.L."/>
            <person name="Bailey J."/>
            <person name="Beasley H."/>
            <person name="Bethel G."/>
            <person name="Bird C.P."/>
            <person name="Bray-Allen S."/>
            <person name="Brown J.Y."/>
            <person name="Brown A.J."/>
            <person name="Buckley D."/>
            <person name="Burton J."/>
            <person name="Bye J."/>
            <person name="Carder C."/>
            <person name="Chapman J.C."/>
            <person name="Clark S.Y."/>
            <person name="Clarke G."/>
            <person name="Clee C."/>
            <person name="Cobley V."/>
            <person name="Collier R.E."/>
            <person name="Corby N."/>
            <person name="Coville G.J."/>
            <person name="Davies J."/>
            <person name="Deadman R."/>
            <person name="Dunn M."/>
            <person name="Earthrowl M."/>
            <person name="Ellington A.G."/>
            <person name="Errington H."/>
            <person name="Frankish A."/>
            <person name="Frankland J."/>
            <person name="French L."/>
            <person name="Garner P."/>
            <person name="Garnett J."/>
            <person name="Gay L."/>
            <person name="Ghori M.R.J."/>
            <person name="Gibson R."/>
            <person name="Gilby L.M."/>
            <person name="Gillett W."/>
            <person name="Glithero R.J."/>
            <person name="Grafham D.V."/>
            <person name="Griffiths C."/>
            <person name="Griffiths-Jones S."/>
            <person name="Grocock R."/>
            <person name="Hammond S."/>
            <person name="Harrison E.S.I."/>
            <person name="Hart E."/>
            <person name="Haugen E."/>
            <person name="Heath P.D."/>
            <person name="Holmes S."/>
            <person name="Holt K."/>
            <person name="Howden P.J."/>
            <person name="Hunt A.R."/>
            <person name="Hunt S.E."/>
            <person name="Hunter G."/>
            <person name="Isherwood J."/>
            <person name="James R."/>
            <person name="Johnson C."/>
            <person name="Johnson D."/>
            <person name="Joy A."/>
            <person name="Kay M."/>
            <person name="Kershaw J.K."/>
            <person name="Kibukawa M."/>
            <person name="Kimberley A.M."/>
            <person name="King A."/>
            <person name="Knights A.J."/>
            <person name="Lad H."/>
            <person name="Laird G."/>
            <person name="Lawlor S."/>
            <person name="Leongamornlert D.A."/>
            <person name="Lloyd D.M."/>
            <person name="Loveland J."/>
            <person name="Lovell J."/>
            <person name="Lush M.J."/>
            <person name="Lyne R."/>
            <person name="Martin S."/>
            <person name="Mashreghi-Mohammadi M."/>
            <person name="Matthews L."/>
            <person name="Matthews N.S.W."/>
            <person name="McLaren S."/>
            <person name="Milne S."/>
            <person name="Mistry S."/>
            <person name="Moore M.J.F."/>
            <person name="Nickerson T."/>
            <person name="O'Dell C.N."/>
            <person name="Oliver K."/>
            <person name="Palmeiri A."/>
            <person name="Palmer S.A."/>
            <person name="Parker A."/>
            <person name="Patel D."/>
            <person name="Pearce A.V."/>
            <person name="Peck A.I."/>
            <person name="Pelan S."/>
            <person name="Phelps K."/>
            <person name="Phillimore B.J."/>
            <person name="Plumb R."/>
            <person name="Rajan J."/>
            <person name="Raymond C."/>
            <person name="Rouse G."/>
            <person name="Saenphimmachak C."/>
            <person name="Sehra H.K."/>
            <person name="Sheridan E."/>
            <person name="Shownkeen R."/>
            <person name="Sims S."/>
            <person name="Skuce C.D."/>
            <person name="Smith M."/>
            <person name="Steward C."/>
            <person name="Subramanian S."/>
            <person name="Sycamore N."/>
            <person name="Tracey A."/>
            <person name="Tromans A."/>
            <person name="Van Helmond Z."/>
            <person name="Wall M."/>
            <person name="Wallis J.M."/>
            <person name="White S."/>
            <person name="Whitehead S.L."/>
            <person name="Wilkinson J.E."/>
            <person name="Willey D.L."/>
            <person name="Williams H."/>
            <person name="Wilming L."/>
            <person name="Wray P.W."/>
            <person name="Wu Z."/>
            <person name="Coulson A."/>
            <person name="Vaudin M."/>
            <person name="Sulston J.E."/>
            <person name="Durbin R.M."/>
            <person name="Hubbard T."/>
            <person name="Wooster R."/>
            <person name="Dunham I."/>
            <person name="Carter N.P."/>
            <person name="McVean G."/>
            <person name="Ross M.T."/>
            <person name="Harrow J."/>
            <person name="Olson M.V."/>
            <person name="Beck S."/>
            <person name="Rogers J."/>
            <person name="Bentley D.R."/>
        </authorList>
    </citation>
    <scope>NUCLEOTIDE SEQUENCE [LARGE SCALE GENOMIC DNA]</scope>
</reference>
<reference key="6">
    <citation type="journal article" date="2004" name="Genome Res.">
        <title>The status, quality, and expansion of the NIH full-length cDNA project: the Mammalian Gene Collection (MGC).</title>
        <authorList>
            <consortium name="The MGC Project Team"/>
        </authorList>
    </citation>
    <scope>NUCLEOTIDE SEQUENCE [LARGE SCALE MRNA] (ISOFORMS 1 AND 3)</scope>
    <source>
        <tissue>Eye</tissue>
        <tissue>Placenta</tissue>
    </source>
</reference>
<reference key="7">
    <citation type="journal article" date="2008" name="J. Proteome Res.">
        <title>Combining protein-based IMAC, peptide-based IMAC, and MudPIT for efficient phosphoproteomic analysis.</title>
        <authorList>
            <person name="Cantin G.T."/>
            <person name="Yi W."/>
            <person name="Lu B."/>
            <person name="Park S.K."/>
            <person name="Xu T."/>
            <person name="Lee J.-D."/>
            <person name="Yates J.R. III"/>
        </authorList>
    </citation>
    <scope>PHOSPHORYLATION [LARGE SCALE ANALYSIS] AT SER-347</scope>
    <scope>IDENTIFICATION BY MASS SPECTROMETRY [LARGE SCALE ANALYSIS]</scope>
    <source>
        <tissue>Cervix carcinoma</tissue>
    </source>
</reference>
<reference key="8">
    <citation type="journal article" date="2008" name="Proc. Natl. Acad. Sci. U.S.A.">
        <title>A quantitative atlas of mitotic phosphorylation.</title>
        <authorList>
            <person name="Dephoure N."/>
            <person name="Zhou C."/>
            <person name="Villen J."/>
            <person name="Beausoleil S.A."/>
            <person name="Bakalarski C.E."/>
            <person name="Elledge S.J."/>
            <person name="Gygi S.P."/>
        </authorList>
    </citation>
    <scope>PHOSPHORYLATION [LARGE SCALE ANALYSIS] AT SER-387</scope>
    <scope>IDENTIFICATION BY MASS SPECTROMETRY [LARGE SCALE ANALYSIS]</scope>
    <source>
        <tissue>Cervix carcinoma</tissue>
    </source>
</reference>
<reference key="9">
    <citation type="journal article" date="2009" name="Anal. Chem.">
        <title>Lys-N and trypsin cover complementary parts of the phosphoproteome in a refined SCX-based approach.</title>
        <authorList>
            <person name="Gauci S."/>
            <person name="Helbig A.O."/>
            <person name="Slijper M."/>
            <person name="Krijgsveld J."/>
            <person name="Heck A.J."/>
            <person name="Mohammed S."/>
        </authorList>
    </citation>
    <scope>IDENTIFICATION BY MASS SPECTROMETRY [LARGE SCALE ANALYSIS]</scope>
</reference>
<reference key="10">
    <citation type="journal article" date="2009" name="Sci. Signal.">
        <title>Quantitative phosphoproteomic analysis of T cell receptor signaling reveals system-wide modulation of protein-protein interactions.</title>
        <authorList>
            <person name="Mayya V."/>
            <person name="Lundgren D.H."/>
            <person name="Hwang S.-I."/>
            <person name="Rezaul K."/>
            <person name="Wu L."/>
            <person name="Eng J.K."/>
            <person name="Rodionov V."/>
            <person name="Han D.K."/>
        </authorList>
    </citation>
    <scope>PHOSPHORYLATION [LARGE SCALE ANALYSIS] AT SER-347; SER-352; THR-360; SER-381 AND SER-387</scope>
    <scope>IDENTIFICATION BY MASS SPECTROMETRY [LARGE SCALE ANALYSIS]</scope>
    <source>
        <tissue>Leukemic T-cell</tissue>
    </source>
</reference>
<reference key="11">
    <citation type="journal article" date="2010" name="Sci. Signal.">
        <title>Quantitative phosphoproteomics reveals widespread full phosphorylation site occupancy during mitosis.</title>
        <authorList>
            <person name="Olsen J.V."/>
            <person name="Vermeulen M."/>
            <person name="Santamaria A."/>
            <person name="Kumar C."/>
            <person name="Miller M.L."/>
            <person name="Jensen L.J."/>
            <person name="Gnad F."/>
            <person name="Cox J."/>
            <person name="Jensen T.S."/>
            <person name="Nigg E.A."/>
            <person name="Brunak S."/>
            <person name="Mann M."/>
        </authorList>
    </citation>
    <scope>PHOSPHORYLATION [LARGE SCALE ANALYSIS] AT SER-347; THR-360 AND SER-387</scope>
    <scope>IDENTIFICATION BY MASS SPECTROMETRY [LARGE SCALE ANALYSIS]</scope>
    <source>
        <tissue>Cervix carcinoma</tissue>
    </source>
</reference>
<reference key="12">
    <citation type="journal article" date="2011" name="Sci. Signal.">
        <title>System-wide temporal characterization of the proteome and phosphoproteome of human embryonic stem cell differentiation.</title>
        <authorList>
            <person name="Rigbolt K.T."/>
            <person name="Prokhorova T.A."/>
            <person name="Akimov V."/>
            <person name="Henningsen J."/>
            <person name="Johansen P.T."/>
            <person name="Kratchmarova I."/>
            <person name="Kassem M."/>
            <person name="Mann M."/>
            <person name="Olsen J.V."/>
            <person name="Blagoev B."/>
        </authorList>
    </citation>
    <scope>PHOSPHORYLATION [LARGE SCALE ANALYSIS] AT SER-347 AND SER-352</scope>
    <scope>IDENTIFICATION BY MASS SPECTROMETRY [LARGE SCALE ANALYSIS]</scope>
</reference>
<reference key="13">
    <citation type="journal article" date="2012" name="Proc. Natl. Acad. Sci. U.S.A.">
        <title>N-terminal acetylome analyses and functional insights of the N-terminal acetyltransferase NatB.</title>
        <authorList>
            <person name="Van Damme P."/>
            <person name="Lasa M."/>
            <person name="Polevoda B."/>
            <person name="Gazquez C."/>
            <person name="Elosegui-Artola A."/>
            <person name="Kim D.S."/>
            <person name="De Juan-Pardo E."/>
            <person name="Demeyer K."/>
            <person name="Hole K."/>
            <person name="Larrea E."/>
            <person name="Timmerman E."/>
            <person name="Prieto J."/>
            <person name="Arnesen T."/>
            <person name="Sherman F."/>
            <person name="Gevaert K."/>
            <person name="Aldabe R."/>
        </authorList>
    </citation>
    <scope>ACETYLATION [LARGE SCALE ANALYSIS] AT MET-1</scope>
    <scope>IDENTIFICATION BY MASS SPECTROMETRY [LARGE SCALE ANALYSIS]</scope>
</reference>
<reference key="14">
    <citation type="journal article" date="2013" name="J. Proteome Res.">
        <title>Toward a comprehensive characterization of a human cancer cell phosphoproteome.</title>
        <authorList>
            <person name="Zhou H."/>
            <person name="Di Palma S."/>
            <person name="Preisinger C."/>
            <person name="Peng M."/>
            <person name="Polat A.N."/>
            <person name="Heck A.J."/>
            <person name="Mohammed S."/>
        </authorList>
    </citation>
    <scope>PHOSPHORYLATION [LARGE SCALE ANALYSIS] AT SER-347 AND THR-360</scope>
    <scope>IDENTIFICATION BY MASS SPECTROMETRY [LARGE SCALE ANALYSIS]</scope>
    <source>
        <tissue>Cervix carcinoma</tissue>
        <tissue>Erythroleukemia</tissue>
    </source>
</reference>
<reference key="15">
    <citation type="journal article" date="2014" name="J. Proteomics">
        <title>An enzyme assisted RP-RPLC approach for in-depth analysis of human liver phosphoproteome.</title>
        <authorList>
            <person name="Bian Y."/>
            <person name="Song C."/>
            <person name="Cheng K."/>
            <person name="Dong M."/>
            <person name="Wang F."/>
            <person name="Huang J."/>
            <person name="Sun D."/>
            <person name="Wang L."/>
            <person name="Ye M."/>
            <person name="Zou H."/>
        </authorList>
    </citation>
    <scope>PHOSPHORYLATION [LARGE SCALE ANALYSIS] AT SER-347</scope>
    <scope>IDENTIFICATION BY MASS SPECTROMETRY [LARGE SCALE ANALYSIS]</scope>
    <source>
        <tissue>Liver</tissue>
    </source>
</reference>
<reference key="16">
    <citation type="journal article" date="2014" name="Mol. Cell. Proteomics">
        <title>Immunoaffinity enrichment and mass spectrometry analysis of protein methylation.</title>
        <authorList>
            <person name="Guo A."/>
            <person name="Gu H."/>
            <person name="Zhou J."/>
            <person name="Mulhern D."/>
            <person name="Wang Y."/>
            <person name="Lee K.A."/>
            <person name="Yang V."/>
            <person name="Aguiar M."/>
            <person name="Kornhauser J."/>
            <person name="Jia X."/>
            <person name="Ren J."/>
            <person name="Beausoleil S.A."/>
            <person name="Silva J.C."/>
            <person name="Vemulapalli V."/>
            <person name="Bedford M.T."/>
            <person name="Comb M.J."/>
        </authorList>
    </citation>
    <scope>METHYLATION [LARGE SCALE ANALYSIS] AT ARG-155; ARG-161 AND ARG-165</scope>
    <scope>IDENTIFICATION BY MASS SPECTROMETRY [LARGE SCALE ANALYSIS]</scope>
    <source>
        <tissue>Colon carcinoma</tissue>
    </source>
</reference>
<feature type="chain" id="PRO_0000123828" description="Single-stranded DNA-binding protein 3">
    <location>
        <begin position="1"/>
        <end position="388"/>
    </location>
</feature>
<feature type="domain" description="LisH" evidence="3">
    <location>
        <begin position="16"/>
        <end position="48"/>
    </location>
</feature>
<feature type="region of interest" description="Disordered" evidence="4">
    <location>
        <begin position="101"/>
        <end position="388"/>
    </location>
</feature>
<feature type="compositionally biased region" description="Pro residues" evidence="4">
    <location>
        <begin position="126"/>
        <end position="139"/>
    </location>
</feature>
<feature type="compositionally biased region" description="Low complexity" evidence="4">
    <location>
        <begin position="200"/>
        <end position="209"/>
    </location>
</feature>
<feature type="compositionally biased region" description="Low complexity" evidence="4">
    <location>
        <begin position="250"/>
        <end position="268"/>
    </location>
</feature>
<feature type="compositionally biased region" description="Pro residues" evidence="4">
    <location>
        <begin position="272"/>
        <end position="282"/>
    </location>
</feature>
<feature type="compositionally biased region" description="Polar residues" evidence="4">
    <location>
        <begin position="285"/>
        <end position="296"/>
    </location>
</feature>
<feature type="compositionally biased region" description="Gly residues" evidence="4">
    <location>
        <begin position="315"/>
        <end position="325"/>
    </location>
</feature>
<feature type="compositionally biased region" description="Low complexity" evidence="4">
    <location>
        <begin position="346"/>
        <end position="357"/>
    </location>
</feature>
<feature type="compositionally biased region" description="Polar residues" evidence="4">
    <location>
        <begin position="373"/>
        <end position="388"/>
    </location>
</feature>
<feature type="modified residue" description="N-acetylmethionine" evidence="13">
    <location>
        <position position="1"/>
    </location>
</feature>
<feature type="modified residue" description="Asymmetric dimethylarginine" evidence="15">
    <location>
        <position position="155"/>
    </location>
</feature>
<feature type="modified residue" description="Asymmetric dimethylarginine" evidence="15">
    <location>
        <position position="161"/>
    </location>
</feature>
<feature type="modified residue" description="Asymmetric dimethylarginine" evidence="15">
    <location>
        <position position="165"/>
    </location>
</feature>
<feature type="modified residue" description="Phosphoserine" evidence="8 10 11 12 14 16">
    <location>
        <position position="347"/>
    </location>
</feature>
<feature type="modified residue" description="Phosphoserine" evidence="10 12">
    <location>
        <position position="352"/>
    </location>
</feature>
<feature type="modified residue" description="Phosphoserine" evidence="2">
    <location>
        <position position="355"/>
    </location>
</feature>
<feature type="modified residue" description="Phosphothreonine" evidence="10 11 14">
    <location>
        <position position="360"/>
    </location>
</feature>
<feature type="modified residue" description="Phosphoserine" evidence="10">
    <location>
        <position position="381"/>
    </location>
</feature>
<feature type="modified residue" description="Phosphoserine" evidence="9 10 11">
    <location>
        <position position="387"/>
    </location>
</feature>
<feature type="splice variant" id="VSP_006260" description="In isoform 2." evidence="5">
    <location>
        <begin position="123"/>
        <end position="149"/>
    </location>
</feature>
<feature type="splice variant" id="VSP_006261" description="In isoform 3." evidence="6 7">
    <location>
        <begin position="150"/>
        <end position="169"/>
    </location>
</feature>
<organism>
    <name type="scientific">Homo sapiens</name>
    <name type="common">Human</name>
    <dbReference type="NCBI Taxonomy" id="9606"/>
    <lineage>
        <taxon>Eukaryota</taxon>
        <taxon>Metazoa</taxon>
        <taxon>Chordata</taxon>
        <taxon>Craniata</taxon>
        <taxon>Vertebrata</taxon>
        <taxon>Euteleostomi</taxon>
        <taxon>Mammalia</taxon>
        <taxon>Eutheria</taxon>
        <taxon>Euarchontoglires</taxon>
        <taxon>Primates</taxon>
        <taxon>Haplorrhini</taxon>
        <taxon>Catarrhini</taxon>
        <taxon>Hominidae</taxon>
        <taxon>Homo</taxon>
    </lineage>
</organism>
<proteinExistence type="evidence at protein level"/>
<sequence length="388" mass="40421">MFAKGKGSAVPSDGQAREKLALYVYEYLLHVGAQKSAQTFLSEIRWEKNITLGEPPGFLHSWWCVFWDLYCAAPERRDTCEHSSEAKAFHDYSAAAAPSPVLGNIPPNDGMPGGPIPPGFFQGPPGSQPSPHAQPPPHNPSSMMGPHSQPFMSPRYAGGPRPPIRMGNQPPGGVPGTQPLLPNSMDPTRQQGHPNMGGSMQRMNPPRGMGPMGPGPQNYGSGMRPPPNSLGPAMPGINMGPGAGRPWPNPNSANSIPYSSSSPGTYVGPPGGGGPPGTPIMPSPADSTNSSDNIYTMINPVPPGGSRSNFPMGPGSDGPMGGMGGMEPHHMNGSLGSGDIDGLPKNSPNNISGISNPPGTPRDDGELGGNFLHSFQNDNYSPSMTMSV</sequence>
<name>SSBP3_HUMAN</name>